<dbReference type="EMBL" id="CU928161">
    <property type="protein sequence ID" value="CAR02641.1"/>
    <property type="molecule type" value="Genomic_DNA"/>
</dbReference>
<dbReference type="RefSeq" id="WP_000366957.1">
    <property type="nucleotide sequence ID" value="NC_011742.1"/>
</dbReference>
<dbReference type="SMR" id="B7ML00"/>
<dbReference type="KEGG" id="ecz:ECS88_1316"/>
<dbReference type="HOGENOM" id="CLU_143392_0_0_6"/>
<dbReference type="Proteomes" id="UP000000747">
    <property type="component" value="Chromosome"/>
</dbReference>
<dbReference type="Gene3D" id="3.10.450.140">
    <property type="entry name" value="dsDNA mimic, putative"/>
    <property type="match status" value="1"/>
</dbReference>
<dbReference type="HAMAP" id="MF_00680">
    <property type="entry name" value="Put_dsDNA_mimic"/>
    <property type="match status" value="1"/>
</dbReference>
<dbReference type="InterPro" id="IPR007376">
    <property type="entry name" value="dsDNA_mimic_put"/>
</dbReference>
<dbReference type="InterPro" id="IPR036763">
    <property type="entry name" value="Put_dsDNA_mimic_sf"/>
</dbReference>
<dbReference type="NCBIfam" id="NF003469">
    <property type="entry name" value="PRK05094.1"/>
    <property type="match status" value="1"/>
</dbReference>
<dbReference type="Pfam" id="PF04269">
    <property type="entry name" value="DUF440"/>
    <property type="match status" value="1"/>
</dbReference>
<dbReference type="PIRSF" id="PIRSF004916">
    <property type="entry name" value="UCP004916"/>
    <property type="match status" value="1"/>
</dbReference>
<dbReference type="SUPFAM" id="SSF102816">
    <property type="entry name" value="Putative dsDNA mimic"/>
    <property type="match status" value="1"/>
</dbReference>
<keyword id="KW-1185">Reference proteome</keyword>
<proteinExistence type="inferred from homology"/>
<protein>
    <recommendedName>
        <fullName evidence="1">Putative double-stranded DNA mimic protein YciU</fullName>
    </recommendedName>
</protein>
<comment type="function">
    <text evidence="1">May act as a double-stranded DNA (dsDNA) mimic. Probably regulates the activity of a dsDNA-binding protein.</text>
</comment>
<comment type="similarity">
    <text evidence="1">Belongs to the putative dsDNA mimic protein family.</text>
</comment>
<evidence type="ECO:0000255" key="1">
    <source>
        <dbReference type="HAMAP-Rule" id="MF_00680"/>
    </source>
</evidence>
<sequence>MDMDLNNRLTEDETLEQAYDIFLELAADNLDPADVLLFNLQFEERGGAELFDPAEDWLEHVDFDLNPDFFAEVVIGLADSEDGEINDVFARILLCREKDHKLCHIIWRE</sequence>
<organism>
    <name type="scientific">Escherichia coli O45:K1 (strain S88 / ExPEC)</name>
    <dbReference type="NCBI Taxonomy" id="585035"/>
    <lineage>
        <taxon>Bacteria</taxon>
        <taxon>Pseudomonadati</taxon>
        <taxon>Pseudomonadota</taxon>
        <taxon>Gammaproteobacteria</taxon>
        <taxon>Enterobacterales</taxon>
        <taxon>Enterobacteriaceae</taxon>
        <taxon>Escherichia</taxon>
    </lineage>
</organism>
<gene>
    <name evidence="1" type="primary">yciU</name>
    <name type="ordered locus">ECS88_1316</name>
</gene>
<accession>B7ML00</accession>
<name>YCIU_ECO45</name>
<reference key="1">
    <citation type="journal article" date="2009" name="PLoS Genet.">
        <title>Organised genome dynamics in the Escherichia coli species results in highly diverse adaptive paths.</title>
        <authorList>
            <person name="Touchon M."/>
            <person name="Hoede C."/>
            <person name="Tenaillon O."/>
            <person name="Barbe V."/>
            <person name="Baeriswyl S."/>
            <person name="Bidet P."/>
            <person name="Bingen E."/>
            <person name="Bonacorsi S."/>
            <person name="Bouchier C."/>
            <person name="Bouvet O."/>
            <person name="Calteau A."/>
            <person name="Chiapello H."/>
            <person name="Clermont O."/>
            <person name="Cruveiller S."/>
            <person name="Danchin A."/>
            <person name="Diard M."/>
            <person name="Dossat C."/>
            <person name="Karoui M.E."/>
            <person name="Frapy E."/>
            <person name="Garry L."/>
            <person name="Ghigo J.M."/>
            <person name="Gilles A.M."/>
            <person name="Johnson J."/>
            <person name="Le Bouguenec C."/>
            <person name="Lescat M."/>
            <person name="Mangenot S."/>
            <person name="Martinez-Jehanne V."/>
            <person name="Matic I."/>
            <person name="Nassif X."/>
            <person name="Oztas S."/>
            <person name="Petit M.A."/>
            <person name="Pichon C."/>
            <person name="Rouy Z."/>
            <person name="Ruf C.S."/>
            <person name="Schneider D."/>
            <person name="Tourret J."/>
            <person name="Vacherie B."/>
            <person name="Vallenet D."/>
            <person name="Medigue C."/>
            <person name="Rocha E.P.C."/>
            <person name="Denamur E."/>
        </authorList>
    </citation>
    <scope>NUCLEOTIDE SEQUENCE [LARGE SCALE GENOMIC DNA]</scope>
    <source>
        <strain>S88 / ExPEC</strain>
    </source>
</reference>
<feature type="chain" id="PRO_1000131700" description="Putative double-stranded DNA mimic protein YciU">
    <location>
        <begin position="1"/>
        <end position="109"/>
    </location>
</feature>